<proteinExistence type="inferred from homology"/>
<accession>Q332V1</accession>
<gene>
    <name evidence="1" type="primary">psbB</name>
</gene>
<protein>
    <recommendedName>
        <fullName evidence="1">Photosystem II CP47 reaction center protein</fullName>
    </recommendedName>
    <alternativeName>
        <fullName evidence="1">PSII 47 kDa protein</fullName>
    </alternativeName>
    <alternativeName>
        <fullName evidence="1">Protein CP-47</fullName>
    </alternativeName>
</protein>
<name>PSBB_LACSA</name>
<evidence type="ECO:0000255" key="1">
    <source>
        <dbReference type="HAMAP-Rule" id="MF_01495"/>
    </source>
</evidence>
<geneLocation type="chloroplast"/>
<reference key="1">
    <citation type="journal article" date="2006" name="Transgenic Res.">
        <title>Efficient and stable transformation of Lactuca sativa L. cv. Cisco (lettuce) plastids.</title>
        <authorList>
            <person name="Kanamoto H."/>
            <person name="Yamashita A."/>
            <person name="Asao H."/>
            <person name="Okumura S."/>
            <person name="Takase H."/>
            <person name="Hattori M."/>
            <person name="Yokota A."/>
            <person name="Tomizawa K."/>
        </authorList>
    </citation>
    <scope>NUCLEOTIDE SEQUENCE [LARGE SCALE GENOMIC DNA]</scope>
    <source>
        <strain>cv. Cisco</strain>
    </source>
</reference>
<reference key="2">
    <citation type="submission" date="2006-01" db="EMBL/GenBank/DDBJ databases">
        <title>A comparison of the first two published chloroplast genomes in Asteraceae: Lactuca and Helianthus.</title>
        <authorList>
            <person name="Timme R.E."/>
            <person name="Kuehl J.V."/>
            <person name="Boore J.L."/>
            <person name="Jansen R.K."/>
        </authorList>
    </citation>
    <scope>NUCLEOTIDE SEQUENCE [LARGE SCALE GENOMIC DNA]</scope>
    <source>
        <strain>cv. Salinas</strain>
    </source>
</reference>
<feature type="chain" id="PRO_0000359833" description="Photosystem II CP47 reaction center protein">
    <location>
        <begin position="1"/>
        <end position="508"/>
    </location>
</feature>
<feature type="transmembrane region" description="Helical" evidence="1">
    <location>
        <begin position="21"/>
        <end position="36"/>
    </location>
</feature>
<feature type="transmembrane region" description="Helical" evidence="1">
    <location>
        <begin position="101"/>
        <end position="115"/>
    </location>
</feature>
<feature type="transmembrane region" description="Helical" evidence="1">
    <location>
        <begin position="140"/>
        <end position="156"/>
    </location>
</feature>
<feature type="transmembrane region" description="Helical" evidence="1">
    <location>
        <begin position="203"/>
        <end position="218"/>
    </location>
</feature>
<feature type="transmembrane region" description="Helical" evidence="1">
    <location>
        <begin position="237"/>
        <end position="252"/>
    </location>
</feature>
<feature type="transmembrane region" description="Helical" evidence="1">
    <location>
        <begin position="457"/>
        <end position="472"/>
    </location>
</feature>
<sequence length="508" mass="56071">MGLPWYRVHTVVLNDPGRLLSVHIMHTALVAGWAGSMALYELAVFDPSDPVLDPMWRQGMFVIPFMTRLGITNSWGGWSITGGTITNPGIWSYEGVAGAHIVFSGLCFLAAIWHWVYWDLEIFSDERTGKPSLDLPKIFGIHLFLAGVACFGFGAFHVTGLYGPGIWVSDPYGLTGKVQAVNPSWGVEGFDPFVPGGIASHHIAAGTLGILAGLFHLSVRPPQRLYKGLRMGNIETVLSSSIAAVFFAAFVVAGTMWYGSATTPIELFGPTRYQWDQGYFQQEIYRRVSAGLAENQSLSEAWSKIPEKLAFYDYIGNNPAKGGLFRAGSMDNGDGIAVGWLGHPIFRDKEGRELFVRRMPTFFETFPVVLVDGDGIVRADVPFRRAESKYSVEQVGVTVEFYGGELNGVSYSDPVTVKKYARRAQLGEIFELDRATLKSDGVFRSSPRGWFTFGHASFALLFFFGHIWHGARTLFRDVFAGIDPDLDAQVEFGAFQKLGDPTTRRQIG</sequence>
<comment type="function">
    <text evidence="1">One of the components of the core complex of photosystem II (PSII). It binds chlorophyll and helps catalyze the primary light-induced photochemical processes of PSII. PSII is a light-driven water:plastoquinone oxidoreductase, using light energy to abstract electrons from H(2)O, generating O(2) and a proton gradient subsequently used for ATP formation.</text>
</comment>
<comment type="cofactor">
    <text evidence="1">Binds multiple chlorophylls. PSII binds additional chlorophylls, carotenoids and specific lipids.</text>
</comment>
<comment type="subunit">
    <text evidence="1">PSII is composed of 1 copy each of membrane proteins PsbA, PsbB, PsbC, PsbD, PsbE, PsbF, PsbH, PsbI, PsbJ, PsbK, PsbL, PsbM, PsbT, PsbX, PsbY, PsbZ, Psb30/Ycf12, at least 3 peripheral proteins of the oxygen-evolving complex and a large number of cofactors. It forms dimeric complexes.</text>
</comment>
<comment type="subcellular location">
    <subcellularLocation>
        <location evidence="1">Plastid</location>
        <location evidence="1">Chloroplast thylakoid membrane</location>
        <topology evidence="1">Multi-pass membrane protein</topology>
    </subcellularLocation>
</comment>
<comment type="similarity">
    <text evidence="1">Belongs to the PsbB/PsbC family. PsbB subfamily.</text>
</comment>
<dbReference type="EMBL" id="DQ383816">
    <property type="protein sequence ID" value="ABD47258.1"/>
    <property type="molecule type" value="Genomic_DNA"/>
</dbReference>
<dbReference type="EMBL" id="AP007232">
    <property type="protein sequence ID" value="BAE47621.1"/>
    <property type="molecule type" value="Genomic_DNA"/>
</dbReference>
<dbReference type="RefSeq" id="YP_398354.1">
    <property type="nucleotide sequence ID" value="NC_007578.1"/>
</dbReference>
<dbReference type="SMR" id="Q332V1"/>
<dbReference type="GeneID" id="3772835"/>
<dbReference type="KEGG" id="lsv:3772835"/>
<dbReference type="OrthoDB" id="1843540at2759"/>
<dbReference type="GO" id="GO:0009535">
    <property type="term" value="C:chloroplast thylakoid membrane"/>
    <property type="evidence" value="ECO:0007669"/>
    <property type="project" value="UniProtKB-SubCell"/>
</dbReference>
<dbReference type="GO" id="GO:0009523">
    <property type="term" value="C:photosystem II"/>
    <property type="evidence" value="ECO:0007669"/>
    <property type="project" value="UniProtKB-KW"/>
</dbReference>
<dbReference type="GO" id="GO:0016168">
    <property type="term" value="F:chlorophyll binding"/>
    <property type="evidence" value="ECO:0007669"/>
    <property type="project" value="UniProtKB-UniRule"/>
</dbReference>
<dbReference type="GO" id="GO:0045156">
    <property type="term" value="F:electron transporter, transferring electrons within the cyclic electron transport pathway of photosynthesis activity"/>
    <property type="evidence" value="ECO:0007669"/>
    <property type="project" value="InterPro"/>
</dbReference>
<dbReference type="GO" id="GO:0009772">
    <property type="term" value="P:photosynthetic electron transport in photosystem II"/>
    <property type="evidence" value="ECO:0007669"/>
    <property type="project" value="InterPro"/>
</dbReference>
<dbReference type="FunFam" id="3.10.680.10:FF:000001">
    <property type="entry name" value="Photosystem II CP47 reaction center protein"/>
    <property type="match status" value="1"/>
</dbReference>
<dbReference type="Gene3D" id="3.10.680.10">
    <property type="entry name" value="Photosystem II CP47 reaction center protein"/>
    <property type="match status" value="1"/>
</dbReference>
<dbReference type="HAMAP" id="MF_01495">
    <property type="entry name" value="PSII_PsbB_CP47"/>
    <property type="match status" value="1"/>
</dbReference>
<dbReference type="InterPro" id="IPR000932">
    <property type="entry name" value="PS_antenna-like"/>
</dbReference>
<dbReference type="InterPro" id="IPR036001">
    <property type="entry name" value="PS_II_antenna-like_sf"/>
</dbReference>
<dbReference type="InterPro" id="IPR017486">
    <property type="entry name" value="PSII_PsbB"/>
</dbReference>
<dbReference type="NCBIfam" id="TIGR03039">
    <property type="entry name" value="PS_II_CP47"/>
    <property type="match status" value="1"/>
</dbReference>
<dbReference type="PANTHER" id="PTHR33180">
    <property type="entry name" value="PHOTOSYSTEM II CP43 REACTION CENTER PROTEIN"/>
    <property type="match status" value="1"/>
</dbReference>
<dbReference type="PANTHER" id="PTHR33180:SF38">
    <property type="entry name" value="PHOTOSYSTEM II CP47 REACTION CENTER PROTEIN"/>
    <property type="match status" value="1"/>
</dbReference>
<dbReference type="Pfam" id="PF00421">
    <property type="entry name" value="PSII"/>
    <property type="match status" value="1"/>
</dbReference>
<dbReference type="SUPFAM" id="SSF161077">
    <property type="entry name" value="Photosystem II antenna protein-like"/>
    <property type="match status" value="1"/>
</dbReference>
<organism>
    <name type="scientific">Lactuca sativa</name>
    <name type="common">Garden lettuce</name>
    <dbReference type="NCBI Taxonomy" id="4236"/>
    <lineage>
        <taxon>Eukaryota</taxon>
        <taxon>Viridiplantae</taxon>
        <taxon>Streptophyta</taxon>
        <taxon>Embryophyta</taxon>
        <taxon>Tracheophyta</taxon>
        <taxon>Spermatophyta</taxon>
        <taxon>Magnoliopsida</taxon>
        <taxon>eudicotyledons</taxon>
        <taxon>Gunneridae</taxon>
        <taxon>Pentapetalae</taxon>
        <taxon>asterids</taxon>
        <taxon>campanulids</taxon>
        <taxon>Asterales</taxon>
        <taxon>Asteraceae</taxon>
        <taxon>Cichorioideae</taxon>
        <taxon>Cichorieae</taxon>
        <taxon>Lactucinae</taxon>
        <taxon>Lactuca</taxon>
    </lineage>
</organism>
<keyword id="KW-0148">Chlorophyll</keyword>
<keyword id="KW-0150">Chloroplast</keyword>
<keyword id="KW-0157">Chromophore</keyword>
<keyword id="KW-0472">Membrane</keyword>
<keyword id="KW-0602">Photosynthesis</keyword>
<keyword id="KW-0604">Photosystem II</keyword>
<keyword id="KW-0934">Plastid</keyword>
<keyword id="KW-0793">Thylakoid</keyword>
<keyword id="KW-0812">Transmembrane</keyword>
<keyword id="KW-1133">Transmembrane helix</keyword>